<proteinExistence type="evidence at protein level"/>
<evidence type="ECO:0000255" key="1">
    <source>
        <dbReference type="PROSITE-ProRule" id="PRU00102"/>
    </source>
</evidence>
<evidence type="ECO:0000255" key="2">
    <source>
        <dbReference type="PROSITE-ProRule" id="PRU00107"/>
    </source>
</evidence>
<evidence type="ECO:0000269" key="3">
    <source>
    </source>
</evidence>
<evidence type="ECO:0000269" key="4">
    <source>
    </source>
</evidence>
<evidence type="ECO:0000269" key="5">
    <source>
    </source>
</evidence>
<evidence type="ECO:0000269" key="6">
    <source>
    </source>
</evidence>
<evidence type="ECO:0000269" key="7">
    <source>
    </source>
</evidence>
<evidence type="ECO:0000269" key="8">
    <source>
    </source>
</evidence>
<evidence type="ECO:0000269" key="9">
    <source>
    </source>
</evidence>
<evidence type="ECO:0000269" key="10">
    <source>
    </source>
</evidence>
<evidence type="ECO:0000269" key="11">
    <source>
    </source>
</evidence>
<evidence type="ECO:0000269" key="12">
    <source>
    </source>
</evidence>
<evidence type="ECO:0000269" key="13">
    <source>
    </source>
</evidence>
<evidence type="ECO:0000269" key="14">
    <source>
    </source>
</evidence>
<evidence type="ECO:0000269" key="15">
    <source>
    </source>
</evidence>
<evidence type="ECO:0000269" key="16">
    <source>
    </source>
</evidence>
<evidence type="ECO:0000269" key="17">
    <source>
    </source>
</evidence>
<evidence type="ECO:0000305" key="18"/>
<evidence type="ECO:0000305" key="19">
    <source>
    </source>
</evidence>
<evidence type="ECO:0000305" key="20">
    <source>
    </source>
</evidence>
<evidence type="ECO:0000305" key="21">
    <source>
    </source>
</evidence>
<evidence type="ECO:0000305" key="22">
    <source>
    </source>
</evidence>
<evidence type="ECO:0000305" key="23">
    <source>
    </source>
</evidence>
<evidence type="ECO:0000305" key="24">
    <source>
    </source>
</evidence>
<evidence type="ECO:0007829" key="25">
    <source>
        <dbReference type="PDB" id="4BIV"/>
    </source>
</evidence>
<evidence type="ECO:0007829" key="26">
    <source>
        <dbReference type="PDB" id="4BIW"/>
    </source>
</evidence>
<evidence type="ECO:0007829" key="27">
    <source>
        <dbReference type="PDB" id="4BIX"/>
    </source>
</evidence>
<evidence type="ECO:0007829" key="28">
    <source>
        <dbReference type="PDB" id="4BIZ"/>
    </source>
</evidence>
<evidence type="ECO:0007829" key="29">
    <source>
        <dbReference type="PDB" id="8UK7"/>
    </source>
</evidence>
<gene>
    <name type="primary">cpxA</name>
    <name type="synonym">ecfB</name>
    <name type="synonym">eup</name>
    <name type="synonym">ssd</name>
    <name type="ordered locus">b3911</name>
    <name type="ordered locus">JW3882</name>
</gene>
<protein>
    <recommendedName>
        <fullName>Sensor histidine kinase CpxA</fullName>
        <ecNumber evidence="16">2.7.13.3</ecNumber>
    </recommendedName>
</protein>
<reference key="1">
    <citation type="journal article" date="1986" name="J. Biol. Chem.">
        <title>The Cpx proteins of Escherichia coli K12. Immunologic detection of the chromosomal cpxA gene product.</title>
        <authorList>
            <person name="Albin R."/>
            <person name="Weber R.F."/>
            <person name="Silverman P.M."/>
        </authorList>
    </citation>
    <scope>NUCLEOTIDE SEQUENCE [GENOMIC DNA]</scope>
    <scope>SUBCELLULAR LOCATION</scope>
    <scope>TOPOLOGY</scope>
    <source>
        <strain>K12</strain>
    </source>
</reference>
<reference key="2">
    <citation type="journal article" date="1988" name="J. Mol. Biol.">
        <title>The cpx proteins of Escherichia coli K12. Structure of the cpxA polypeptide as an inner membrane component.</title>
        <authorList>
            <person name="Weber R.F."/>
            <person name="Silverman P.M."/>
        </authorList>
    </citation>
    <scope>NUCLEOTIDE SEQUENCE [GENOMIC DNA]</scope>
    <source>
        <strain>K12</strain>
    </source>
</reference>
<reference key="3">
    <citation type="journal article" date="1993" name="Nucleic Acids Res.">
        <title>Analysis of the Escherichia coli genome. III. DNA sequence of the region from 87.2 to 89.2 minutes.</title>
        <authorList>
            <person name="Plunkett G. III"/>
            <person name="Burland V."/>
            <person name="Daniels D.L."/>
            <person name="Blattner F.R."/>
        </authorList>
    </citation>
    <scope>NUCLEOTIDE SEQUENCE [LARGE SCALE GENOMIC DNA]</scope>
    <source>
        <strain>K12 / MG1655 / ATCC 47076</strain>
    </source>
</reference>
<reference key="4">
    <citation type="journal article" date="1997" name="Science">
        <title>The complete genome sequence of Escherichia coli K-12.</title>
        <authorList>
            <person name="Blattner F.R."/>
            <person name="Plunkett G. III"/>
            <person name="Bloch C.A."/>
            <person name="Perna N.T."/>
            <person name="Burland V."/>
            <person name="Riley M."/>
            <person name="Collado-Vides J."/>
            <person name="Glasner J.D."/>
            <person name="Rode C.K."/>
            <person name="Mayhew G.F."/>
            <person name="Gregor J."/>
            <person name="Davis N.W."/>
            <person name="Kirkpatrick H.A."/>
            <person name="Goeden M.A."/>
            <person name="Rose D.J."/>
            <person name="Mau B."/>
            <person name="Shao Y."/>
        </authorList>
    </citation>
    <scope>NUCLEOTIDE SEQUENCE [LARGE SCALE GENOMIC DNA]</scope>
    <source>
        <strain>K12 / MG1655 / ATCC 47076</strain>
    </source>
</reference>
<reference key="5">
    <citation type="journal article" date="2006" name="Mol. Syst. Biol.">
        <title>Highly accurate genome sequences of Escherichia coli K-12 strains MG1655 and W3110.</title>
        <authorList>
            <person name="Hayashi K."/>
            <person name="Morooka N."/>
            <person name="Yamamoto Y."/>
            <person name="Fujita K."/>
            <person name="Isono K."/>
            <person name="Choi S."/>
            <person name="Ohtsubo E."/>
            <person name="Baba T."/>
            <person name="Wanner B.L."/>
            <person name="Mori H."/>
            <person name="Horiuchi T."/>
        </authorList>
    </citation>
    <scope>NUCLEOTIDE SEQUENCE [LARGE SCALE GENOMIC DNA]</scope>
    <source>
        <strain>K12 / W3110 / ATCC 27325 / DSM 5911</strain>
    </source>
</reference>
<reference key="6">
    <citation type="journal article" date="1990" name="J. Bacteriol.">
        <title>The Cpx proteins of Escherichia coli K-12: evidence that cpxA, ecfB, ssd, and eup mutations all identify the same gene.</title>
        <authorList>
            <person name="Rainwater S."/>
            <person name="Silverman P.M."/>
        </authorList>
    </citation>
    <scope>CHARACTERIZATION</scope>
    <scope>DISRUPTION PHENOTYPE</scope>
    <source>
        <strain>K12 / AE2000</strain>
    </source>
</reference>
<reference key="7">
    <citation type="journal article" date="1993" name="J. Bacteriol.">
        <title>Accumulation of the F plasmid TraJ protein in cpx mutants of Escherichia coli.</title>
        <authorList>
            <person name="Silverman P.M."/>
            <person name="Tran L."/>
            <person name="Harris R."/>
            <person name="Gaudin H.M."/>
        </authorList>
    </citation>
    <scope>FUNCTION</scope>
    <source>
        <strain>K12</strain>
    </source>
</reference>
<reference key="8">
    <citation type="journal article" date="1995" name="Genes Dev.">
        <title>The Cpx two-component signal transduction pathway of Escherichia coli regulates transcription of the gene specifying the stress-inducible periplasmic protease, DegP.</title>
        <authorList>
            <person name="Danese P.N."/>
            <person name="Snyder W.B."/>
            <person name="Cosma C.L."/>
            <person name="Davis L.J."/>
            <person name="Silhavy T.J."/>
        </authorList>
    </citation>
    <scope>FUNCTION</scope>
    <scope>ACTIVITY REGULATION</scope>
    <scope>DISRUPTION PHENOTYPE</scope>
    <source>
        <strain>K12 / MC4100</strain>
    </source>
</reference>
<reference key="9">
    <citation type="journal article" date="1997" name="EMBO J.">
        <title>The chaperone-assisted membrane release and folding pathway is sensed by two signal transduction systems.</title>
        <authorList>
            <person name="Jones C.H."/>
            <person name="Danese P.N."/>
            <person name="Pinkner J.S."/>
            <person name="Silhavy T.J."/>
            <person name="Hultgren S.J."/>
        </authorList>
    </citation>
    <scope>ACTIVITY REGULATION</scope>
</reference>
<reference key="10">
    <citation type="journal article" date="1997" name="J. Bacteriol.">
        <title>Transduction of envelope stress in Escherichia coli by the Cpx two-component system.</title>
        <authorList>
            <person name="Raivio T.L."/>
            <person name="Silhavy T.J."/>
        </authorList>
    </citation>
    <scope>FUNCTION AS A KINASE AND PHOSPHATASE</scope>
    <scope>CATALYTIC ACTIVITY</scope>
    <scope>COFACTOR</scope>
    <scope>DOMAIN</scope>
    <scope>PHOSPHORYLATION AT HIS-248</scope>
    <scope>MUTAGENESIS OF ARG-33; 93-ARG--GLY-124 AND THR-252</scope>
    <source>
        <strain>K12 / MC4100</strain>
    </source>
</reference>
<reference key="11">
    <citation type="journal article" date="1998" name="J. Bacteriol.">
        <title>CpxP, a stress-combative member of the Cpx regulon.</title>
        <authorList>
            <person name="Danese P.N."/>
            <person name="Silhavy T.J."/>
        </authorList>
    </citation>
    <scope>FUNCTION</scope>
    <scope>ACTIVITY REGULATION</scope>
    <scope>DISRUPTION PHENOTYPE</scope>
    <source>
        <strain>K12 / MC4100</strain>
    </source>
</reference>
<reference key="12">
    <citation type="journal article" date="2000" name="Mol. Microbiol.">
        <title>Tethering of CpxP to the inner membrane prevents spheroplast induction of the cpx envelope stress response.</title>
        <authorList>
            <person name="Raivio T.L."/>
            <person name="Laird M.W."/>
            <person name="Joly J.C."/>
            <person name="Silhavy T.J."/>
        </authorList>
    </citation>
    <scope>ACTIVITY REGULATION</scope>
    <scope>DISRUPTION PHENOTYPE</scope>
    <source>
        <strain>K12 / MC4100</strain>
    </source>
</reference>
<reference key="13">
    <citation type="journal article" date="2002" name="Proc. Natl. Acad. Sci. U.S.A.">
        <title>Surface sensing and adhesion of Escherichia coli controlled by the Cpx-signaling pathway.</title>
        <authorList>
            <person name="Otto K."/>
            <person name="Silhavy T.J."/>
        </authorList>
    </citation>
    <scope>FUNCTION IN BIOFILM FORMATION</scope>
    <scope>DISRUPTION PHENOTYPE</scope>
    <source>
        <strain>K12 / MC4100 / ATCC 35695 / DSM 6574</strain>
    </source>
</reference>
<reference key="14">
    <citation type="journal article" date="2005" name="Science">
        <title>Global topology analysis of the Escherichia coli inner membrane proteome.</title>
        <authorList>
            <person name="Daley D.O."/>
            <person name="Rapp M."/>
            <person name="Granseth E."/>
            <person name="Melen K."/>
            <person name="Drew D."/>
            <person name="von Heijne G."/>
        </authorList>
    </citation>
    <scope>SUBCELLULAR LOCATION</scope>
    <scope>TOPOLOGY [LARGE SCALE ANALYSIS]</scope>
    <source>
        <strain>K12 / MG1655 / ATCC 47076</strain>
    </source>
</reference>
<reference key="15">
    <citation type="journal article" date="2005" name="J. Bacteriol.">
        <title>Cpx signal transduction is influenced by a conserved N-terminal domain in the novel inhibitor CpxP and the periplasmic protease DegP.</title>
        <authorList>
            <person name="Buelow D.R."/>
            <person name="Raivio T.L."/>
        </authorList>
    </citation>
    <scope>FUNCTION</scope>
    <scope>ACTIVITY REGULATION</scope>
    <scope>PROBABLE SUBUNIT</scope>
    <source>
        <strain>K12 / MC4100</strain>
    </source>
</reference>
<reference key="16">
    <citation type="journal article" date="2007" name="J. Biol. Chem.">
        <title>Purification, reconstitution, and characterization of the CpxRAP envelope stress system of Escherichia coli.</title>
        <authorList>
            <person name="Fleischer R."/>
            <person name="Heermann R."/>
            <person name="Jung K."/>
            <person name="Hunke S."/>
        </authorList>
    </citation>
    <scope>FUNCTION</scope>
    <scope>ACTIVITY REGULATION</scope>
</reference>
<reference key="17">
    <citation type="journal article" date="2009" name="Mol. Cell">
        <title>Hydroxyurea induces hydroxyl radical-mediated cell death in Escherichia coli.</title>
        <authorList>
            <person name="Davies B.W."/>
            <person name="Kohanski M.A."/>
            <person name="Simmons L.A."/>
            <person name="Winkler J.A."/>
            <person name="Collins J.J."/>
            <person name="Walker G.C."/>
        </authorList>
    </citation>
    <scope>ROLE IN HYDROXYUREA RESISTANCE</scope>
    <scope>DISRUPTION PHENOTYPE</scope>
    <source>
        <strain>K12 / MC4100 / ATCC 35695 / DSM 6574</strain>
    </source>
</reference>
<reference key="18">
    <citation type="journal article" date="2011" name="J. Bacteriol.">
        <title>Structure of the periplasmic stress response protein CpxP.</title>
        <authorList>
            <person name="Thede G.L."/>
            <person name="Arthur D.C."/>
            <person name="Edwards R.A."/>
            <person name="Buelow D.R."/>
            <person name="Wong J.L."/>
            <person name="Raivio T.L."/>
            <person name="Glover J.N."/>
        </authorList>
    </citation>
    <scope>SUBUNIT</scope>
    <source>
        <strain>K12 / MC4100</strain>
    </source>
</reference>
<reference key="19">
    <citation type="journal article" date="2011" name="J. Biol. Chem.">
        <title>Structural basis for two-component system inhibition and pilus sensing by the auxiliary CpxP protein.</title>
        <authorList>
            <person name="Zhou X."/>
            <person name="Keller R."/>
            <person name="Volkmer R."/>
            <person name="Krauss N."/>
            <person name="Scheerer P."/>
            <person name="Hunke S."/>
        </authorList>
    </citation>
    <scope>SUBUNIT</scope>
</reference>
<reference key="20">
    <citation type="journal article" date="2014" name="PLoS ONE">
        <title>Dynamic interaction between the CpxA sensor kinase and the periplasmic accessory protein CpxP mediates signal recognition in E. coli.</title>
        <authorList>
            <person name="Tschauner K."/>
            <person name="Hoernschemeyer P."/>
            <person name="Mueller V.S."/>
            <person name="Hunke S."/>
        </authorList>
    </citation>
    <scope>FUNCTION</scope>
    <scope>ACTIVITY REGULATION</scope>
    <scope>INTERACTION WITH CPXP AND CPXR</scope>
    <scope>SUBCELLULAR LOCATION</scope>
    <source>
        <strain>K12 / MG1655 / ATCC 47076</strain>
    </source>
</reference>
<reference key="21">
    <citation type="journal article" date="2014" name="PLoS Biol.">
        <title>Segmental helical motions and dynamical asymmetry modulate histidine kinase autophosphorylation.</title>
        <authorList>
            <person name="Mechaly A.E."/>
            <person name="Sassoon N."/>
            <person name="Betton J.M."/>
            <person name="Alzari P.M."/>
        </authorList>
    </citation>
    <scope>X-RAY CRYSTALLOGRAPHY (2.00 ANGSTROMS) OF 188-457 IN COMPLEX WITH ADP; ATP AND ATP ANALOG</scope>
    <scope>FUNCTION</scope>
    <scope>SUBUNIT</scope>
    <scope>ACTIVE SITE</scope>
    <scope>REACTION MECHANISM</scope>
    <scope>DOMAIN</scope>
    <scope>PHOSPHORYLATION AT HIS-248</scope>
    <scope>MUTAGENESIS OF SER-185; LEU-186; ALA-197; ASN-204; GLY-222; MET-228 AND ASN-356</scope>
</reference>
<feature type="chain" id="PRO_0000074739" description="Sensor histidine kinase CpxA">
    <location>
        <begin position="1"/>
        <end position="457"/>
    </location>
</feature>
<feature type="topological domain" description="Cytoplasmic" evidence="20">
    <location>
        <begin position="1"/>
        <end position="7"/>
    </location>
</feature>
<feature type="transmembrane region" description="Helical" evidence="18">
    <location>
        <begin position="8"/>
        <end position="29"/>
    </location>
</feature>
<feature type="topological domain" description="Periplasmic" evidence="20 23">
    <location>
        <begin position="30"/>
        <end position="163"/>
    </location>
</feature>
<feature type="transmembrane region" description="Helical" evidence="18">
    <location>
        <begin position="164"/>
        <end position="184"/>
    </location>
</feature>
<feature type="topological domain" description="Cytoplasmic" evidence="20 23">
    <location>
        <begin position="185"/>
        <end position="457"/>
    </location>
</feature>
<feature type="domain" description="HAMP" evidence="1">
    <location>
        <begin position="185"/>
        <end position="237"/>
    </location>
</feature>
<feature type="domain" description="Histidine kinase" evidence="2">
    <location>
        <begin position="245"/>
        <end position="455"/>
    </location>
</feature>
<feature type="active site" description="Nucleophile" evidence="10">
    <location>
        <position position="248"/>
    </location>
</feature>
<feature type="binding site" evidence="10">
    <location>
        <begin position="248"/>
        <end position="251"/>
    </location>
    <ligand>
        <name>ATP</name>
        <dbReference type="ChEBI" id="CHEBI:30616"/>
    </ligand>
</feature>
<feature type="binding site" evidence="10">
    <location>
        <position position="248"/>
    </location>
    <ligand>
        <name>ATP</name>
        <dbReference type="ChEBI" id="CHEBI:30616"/>
    </ligand>
</feature>
<feature type="binding site" evidence="10">
    <location>
        <begin position="359"/>
        <end position="364"/>
    </location>
    <ligand>
        <name>ATP</name>
        <dbReference type="ChEBI" id="CHEBI:30616"/>
    </ligand>
</feature>
<feature type="binding site" evidence="10">
    <location>
        <position position="386"/>
    </location>
    <ligand>
        <name>ATP</name>
        <dbReference type="ChEBI" id="CHEBI:30616"/>
    </ligand>
</feature>
<feature type="binding site" evidence="10">
    <location>
        <begin position="405"/>
        <end position="406"/>
    </location>
    <ligand>
        <name>ATP</name>
        <dbReference type="ChEBI" id="CHEBI:30616"/>
    </ligand>
</feature>
<feature type="binding site" evidence="10">
    <location>
        <begin position="416"/>
        <end position="421"/>
    </location>
    <ligand>
        <name>ATP</name>
        <dbReference type="ChEBI" id="CHEBI:30616"/>
    </ligand>
</feature>
<feature type="modified residue" description="Phosphohistidine; by autocatalysis" evidence="2 22 24">
    <location>
        <position position="248"/>
    </location>
</feature>
<feature type="mutagenesis site" description="In cpxA104; a cpxA gain of function mutant, constitutively active." evidence="16">
    <original>R</original>
    <variation>C</variation>
    <location>
        <position position="33"/>
    </location>
</feature>
<feature type="mutagenesis site" description="In cpxA24; a cpxA gain of function mutant, constitutively active, up-regulation of the Cpx regulon members." evidence="16">
    <location>
        <begin position="93"/>
        <end position="124"/>
    </location>
</feature>
<feature type="mutagenesis site" description="Nearly complete loss of response to excess periplasmic protein." evidence="10">
    <original>S</original>
    <variation>R</variation>
    <location>
        <position position="185"/>
    </location>
</feature>
<feature type="mutagenesis site" description="30% decrease in response to excess periplasmic protein." evidence="10">
    <original>L</original>
    <variation>Q</variation>
    <location>
        <position position="186"/>
    </location>
</feature>
<feature type="mutagenesis site" description="Slight decrease in response to excess periplasmic protein." evidence="10">
    <original>A</original>
    <variation>V</variation>
    <location>
        <position position="197"/>
    </location>
</feature>
<feature type="mutagenesis site" description="80% decrease in response to excess periplasmic protein." evidence="10">
    <original>N</original>
    <variation>Y</variation>
    <location>
        <position position="204"/>
    </location>
</feature>
<feature type="mutagenesis site" description="90% decrease in response to excess periplasmic protein." evidence="10">
    <original>G</original>
    <variation>D</variation>
    <location>
        <position position="222"/>
    </location>
</feature>
<feature type="mutagenesis site" description="75% decrease in response to excess periplasmic protein." evidence="10">
    <original>G</original>
    <variation>R</variation>
    <location>
        <position position="222"/>
    </location>
</feature>
<feature type="mutagenesis site" description="No response to excess periplasmic protein, decreased autophosphorylation, no phosphotransfer to CpxR, no tetramer formation of the C-terminal domain in solution." evidence="10">
    <original>M</original>
    <variation>V</variation>
    <location>
        <position position="228"/>
    </location>
</feature>
<feature type="mutagenesis site" description="In cpxA101; a cpxA gain of function mutant, decreased autophosphorylation, decreased phosphotransfer to CpxR, loss of phosphatase activity, responds to periplasmic protein overproduction." evidence="16">
    <original>T</original>
    <variation>P</variation>
    <location>
        <position position="252"/>
    </location>
</feature>
<feature type="mutagenesis site" description="Nearly complete loss of response to excess periplasmic protein." evidence="10">
    <original>N</original>
    <variation>Y</variation>
    <location>
        <position position="356"/>
    </location>
</feature>
<feature type="sequence conflict" description="In Ref. 1; AAA23600 and 2; CAA31687." evidence="18" ref="1 2">
    <original>W</original>
    <variation>WW</variation>
    <location>
        <position position="68"/>
    </location>
</feature>
<feature type="sequence conflict" description="In Ref. 1; AAA23600/AAA72540 and 2; CAA31687." evidence="18" ref="1 2">
    <original>K</original>
    <variation>R</variation>
    <location>
        <position position="330"/>
    </location>
</feature>
<feature type="helix" evidence="29">
    <location>
        <begin position="40"/>
        <end position="58"/>
    </location>
</feature>
<feature type="helix" evidence="29">
    <location>
        <begin position="67"/>
        <end position="78"/>
    </location>
</feature>
<feature type="strand" evidence="29">
    <location>
        <begin position="84"/>
        <end position="89"/>
    </location>
</feature>
<feature type="strand" evidence="29">
    <location>
        <begin position="94"/>
        <end position="96"/>
    </location>
</feature>
<feature type="helix" evidence="29">
    <location>
        <begin position="99"/>
        <end position="101"/>
    </location>
</feature>
<feature type="helix" evidence="29">
    <location>
        <begin position="102"/>
        <end position="111"/>
    </location>
</feature>
<feature type="strand" evidence="29">
    <location>
        <begin position="119"/>
        <end position="123"/>
    </location>
</feature>
<feature type="strand" evidence="29">
    <location>
        <begin position="126"/>
        <end position="136"/>
    </location>
</feature>
<feature type="strand" evidence="29">
    <location>
        <begin position="139"/>
        <end position="148"/>
    </location>
</feature>
<feature type="helix" evidence="25">
    <location>
        <begin position="189"/>
        <end position="200"/>
    </location>
</feature>
<feature type="turn" evidence="25">
    <location>
        <begin position="201"/>
        <end position="203"/>
    </location>
</feature>
<feature type="helix" evidence="25">
    <location>
        <begin position="209"/>
        <end position="212"/>
    </location>
</feature>
<feature type="strand" evidence="25">
    <location>
        <begin position="214"/>
        <end position="216"/>
    </location>
</feature>
<feature type="helix" evidence="26">
    <location>
        <begin position="217"/>
        <end position="220"/>
    </location>
</feature>
<feature type="helix" evidence="27">
    <location>
        <begin position="221"/>
        <end position="249"/>
    </location>
</feature>
<feature type="helix" evidence="27">
    <location>
        <begin position="251"/>
        <end position="267"/>
    </location>
</feature>
<feature type="helix" evidence="27">
    <location>
        <begin position="272"/>
        <end position="296"/>
    </location>
</feature>
<feature type="strand" evidence="26">
    <location>
        <begin position="299"/>
        <end position="301"/>
    </location>
</feature>
<feature type="strand" evidence="27">
    <location>
        <begin position="306"/>
        <end position="309"/>
    </location>
</feature>
<feature type="helix" evidence="27">
    <location>
        <begin position="310"/>
        <end position="328"/>
    </location>
</feature>
<feature type="strand" evidence="27">
    <location>
        <begin position="331"/>
        <end position="336"/>
    </location>
</feature>
<feature type="strand" evidence="27">
    <location>
        <begin position="342"/>
        <end position="345"/>
    </location>
</feature>
<feature type="helix" evidence="27">
    <location>
        <begin position="347"/>
        <end position="364"/>
    </location>
</feature>
<feature type="strand" evidence="27">
    <location>
        <begin position="366"/>
        <end position="375"/>
    </location>
</feature>
<feature type="strand" evidence="27">
    <location>
        <begin position="377"/>
        <end position="386"/>
    </location>
</feature>
<feature type="helix" evidence="27">
    <location>
        <begin position="393"/>
        <end position="395"/>
    </location>
</feature>
<feature type="helix" evidence="27">
    <location>
        <begin position="398"/>
        <end position="400"/>
    </location>
</feature>
<feature type="helix" evidence="28">
    <location>
        <begin position="407"/>
        <end position="412"/>
    </location>
</feature>
<feature type="helix" evidence="27">
    <location>
        <begin position="421"/>
        <end position="430"/>
    </location>
</feature>
<feature type="strand" evidence="27">
    <location>
        <begin position="434"/>
        <end position="439"/>
    </location>
</feature>
<feature type="strand" evidence="27">
    <location>
        <begin position="443"/>
        <end position="452"/>
    </location>
</feature>
<dbReference type="EC" id="2.7.13.3" evidence="16"/>
<dbReference type="EMBL" id="M13493">
    <property type="protein sequence ID" value="AAA72540.1"/>
    <property type="status" value="ALT_INIT"/>
    <property type="molecule type" value="Genomic_DNA"/>
</dbReference>
<dbReference type="EMBL" id="M36795">
    <property type="protein sequence ID" value="AAA23600.1"/>
    <property type="molecule type" value="Genomic_DNA"/>
</dbReference>
<dbReference type="EMBL" id="X13307">
    <property type="protein sequence ID" value="CAA31687.1"/>
    <property type="molecule type" value="Genomic_DNA"/>
</dbReference>
<dbReference type="EMBL" id="L19201">
    <property type="protein sequence ID" value="AAB03044.1"/>
    <property type="molecule type" value="Genomic_DNA"/>
</dbReference>
<dbReference type="EMBL" id="U00096">
    <property type="protein sequence ID" value="AAC76893.1"/>
    <property type="molecule type" value="Genomic_DNA"/>
</dbReference>
<dbReference type="EMBL" id="AP009048">
    <property type="protein sequence ID" value="BAE77398.1"/>
    <property type="molecule type" value="Genomic_DNA"/>
</dbReference>
<dbReference type="PIR" id="S40855">
    <property type="entry name" value="S40855"/>
</dbReference>
<dbReference type="RefSeq" id="NP_418347.1">
    <property type="nucleotide sequence ID" value="NC_000913.3"/>
</dbReference>
<dbReference type="RefSeq" id="WP_000580417.1">
    <property type="nucleotide sequence ID" value="NZ_STEB01000017.1"/>
</dbReference>
<dbReference type="PDB" id="4BIU">
    <property type="method" value="X-ray"/>
    <property type="resolution" value="3.65 A"/>
    <property type="chains" value="A/B/C/D/E/F=188-457"/>
</dbReference>
<dbReference type="PDB" id="4BIV">
    <property type="method" value="X-ray"/>
    <property type="resolution" value="3.40 A"/>
    <property type="chains" value="A/B=188-457"/>
</dbReference>
<dbReference type="PDB" id="4BIW">
    <property type="method" value="X-ray"/>
    <property type="resolution" value="2.85 A"/>
    <property type="chains" value="A/B=188-457"/>
</dbReference>
<dbReference type="PDB" id="4BIX">
    <property type="method" value="X-ray"/>
    <property type="resolution" value="2.00 A"/>
    <property type="chains" value="A/B=188-457"/>
</dbReference>
<dbReference type="PDB" id="4BIY">
    <property type="method" value="X-ray"/>
    <property type="resolution" value="3.30 A"/>
    <property type="chains" value="A/B/C/D=188-457"/>
</dbReference>
<dbReference type="PDB" id="4BIZ">
    <property type="method" value="X-ray"/>
    <property type="resolution" value="2.65 A"/>
    <property type="chains" value="A/B/C/D/E/F=188-457"/>
</dbReference>
<dbReference type="PDB" id="4CB0">
    <property type="method" value="X-ray"/>
    <property type="resolution" value="3.30 A"/>
    <property type="chains" value="A/B=188-457"/>
</dbReference>
<dbReference type="PDB" id="5LFK">
    <property type="method" value="X-ray"/>
    <property type="resolution" value="3.09 A"/>
    <property type="chains" value="A/B=188-457"/>
</dbReference>
<dbReference type="PDB" id="8UK7">
    <property type="method" value="X-ray"/>
    <property type="resolution" value="1.80 A"/>
    <property type="chains" value="A/B=31-163"/>
</dbReference>
<dbReference type="PDBsum" id="4BIU"/>
<dbReference type="PDBsum" id="4BIV"/>
<dbReference type="PDBsum" id="4BIW"/>
<dbReference type="PDBsum" id="4BIX"/>
<dbReference type="PDBsum" id="4BIY"/>
<dbReference type="PDBsum" id="4BIZ"/>
<dbReference type="PDBsum" id="4CB0"/>
<dbReference type="PDBsum" id="5LFK"/>
<dbReference type="PDBsum" id="8UK7"/>
<dbReference type="SMR" id="P0AE82"/>
<dbReference type="BioGRID" id="4262644">
    <property type="interactions" value="17"/>
</dbReference>
<dbReference type="BioGRID" id="852702">
    <property type="interactions" value="2"/>
</dbReference>
<dbReference type="DIP" id="DIP-48358N"/>
<dbReference type="FunCoup" id="P0AE82">
    <property type="interactions" value="200"/>
</dbReference>
<dbReference type="IntAct" id="P0AE82">
    <property type="interactions" value="2"/>
</dbReference>
<dbReference type="STRING" id="511145.b3911"/>
<dbReference type="CARD" id="ARO:3000830">
    <property type="molecule name" value="cpxA"/>
    <property type="mechanism identifier" value="ARO:0010000"/>
    <property type="mechanism name" value="antibiotic efflux"/>
</dbReference>
<dbReference type="iPTMnet" id="P0AE82"/>
<dbReference type="jPOST" id="P0AE82"/>
<dbReference type="PaxDb" id="511145-b3911"/>
<dbReference type="EnsemblBacteria" id="AAC76893">
    <property type="protein sequence ID" value="AAC76893"/>
    <property type="gene ID" value="b3911"/>
</dbReference>
<dbReference type="GeneID" id="93778027"/>
<dbReference type="GeneID" id="948405"/>
<dbReference type="KEGG" id="ecj:JW3882"/>
<dbReference type="KEGG" id="eco:b3911"/>
<dbReference type="KEGG" id="ecoc:C3026_21150"/>
<dbReference type="PATRIC" id="fig|1411691.4.peg.2793"/>
<dbReference type="EchoBASE" id="EB0161"/>
<dbReference type="eggNOG" id="COG2205">
    <property type="taxonomic scope" value="Bacteria"/>
</dbReference>
<dbReference type="HOGENOM" id="CLU_000445_89_27_6"/>
<dbReference type="InParanoid" id="P0AE82"/>
<dbReference type="OMA" id="ANDLLWW"/>
<dbReference type="OrthoDB" id="9804645at2"/>
<dbReference type="PhylomeDB" id="P0AE82"/>
<dbReference type="BioCyc" id="EcoCyc:CPXA-MONOMER"/>
<dbReference type="BioCyc" id="MetaCyc:CPXA-MONOMER"/>
<dbReference type="BRENDA" id="2.7.13.3">
    <property type="organism ID" value="2026"/>
</dbReference>
<dbReference type="EvolutionaryTrace" id="P0AE82"/>
<dbReference type="PHI-base" id="PHI:8272"/>
<dbReference type="PRO" id="PR:P0AE82"/>
<dbReference type="Proteomes" id="UP000000625">
    <property type="component" value="Chromosome"/>
</dbReference>
<dbReference type="GO" id="GO:0005886">
    <property type="term" value="C:plasma membrane"/>
    <property type="evidence" value="ECO:0000314"/>
    <property type="project" value="EcoCyc"/>
</dbReference>
<dbReference type="GO" id="GO:0005524">
    <property type="term" value="F:ATP binding"/>
    <property type="evidence" value="ECO:0007669"/>
    <property type="project" value="UniProtKB-KW"/>
</dbReference>
<dbReference type="GO" id="GO:0042802">
    <property type="term" value="F:identical protein binding"/>
    <property type="evidence" value="ECO:0000353"/>
    <property type="project" value="IntAct"/>
</dbReference>
<dbReference type="GO" id="GO:0004721">
    <property type="term" value="F:phosphoprotein phosphatase activity"/>
    <property type="evidence" value="ECO:0000314"/>
    <property type="project" value="EcoCyc"/>
</dbReference>
<dbReference type="GO" id="GO:0000155">
    <property type="term" value="F:phosphorelay sensor kinase activity"/>
    <property type="evidence" value="ECO:0000314"/>
    <property type="project" value="CACAO"/>
</dbReference>
<dbReference type="GO" id="GO:0043708">
    <property type="term" value="P:cell adhesion involved in biofilm formation"/>
    <property type="evidence" value="ECO:0000315"/>
    <property type="project" value="CACAO"/>
</dbReference>
<dbReference type="GO" id="GO:0036460">
    <property type="term" value="P:cellular response to cell envelope stress"/>
    <property type="evidence" value="ECO:0000304"/>
    <property type="project" value="EcoCyc"/>
</dbReference>
<dbReference type="GO" id="GO:0009314">
    <property type="term" value="P:response to radiation"/>
    <property type="evidence" value="ECO:0000315"/>
    <property type="project" value="EcoCyc"/>
</dbReference>
<dbReference type="GO" id="GO:0007165">
    <property type="term" value="P:signal transduction"/>
    <property type="evidence" value="ECO:0000304"/>
    <property type="project" value="EcoCyc"/>
</dbReference>
<dbReference type="CDD" id="cd06225">
    <property type="entry name" value="HAMP"/>
    <property type="match status" value="1"/>
</dbReference>
<dbReference type="CDD" id="cd16949">
    <property type="entry name" value="HATPase_CpxA-like"/>
    <property type="match status" value="1"/>
</dbReference>
<dbReference type="CDD" id="cd00082">
    <property type="entry name" value="HisKA"/>
    <property type="match status" value="1"/>
</dbReference>
<dbReference type="FunFam" id="1.10.287.130:FF:000007">
    <property type="entry name" value="Sensor histidine kinase CpxA"/>
    <property type="match status" value="1"/>
</dbReference>
<dbReference type="FunFam" id="3.30.450.210:FF:000001">
    <property type="entry name" value="Sensor histidine kinase CpxA"/>
    <property type="match status" value="1"/>
</dbReference>
<dbReference type="FunFam" id="3.30.565.10:FF:000011">
    <property type="entry name" value="Sensor histidine kinase CpxA"/>
    <property type="match status" value="1"/>
</dbReference>
<dbReference type="Gene3D" id="1.10.287.130">
    <property type="match status" value="1"/>
</dbReference>
<dbReference type="Gene3D" id="3.30.565.10">
    <property type="entry name" value="Histidine kinase-like ATPase, C-terminal domain"/>
    <property type="match status" value="1"/>
</dbReference>
<dbReference type="Gene3D" id="3.30.450.210">
    <property type="entry name" value="Two-component sensor protein CpxA, periplasmic domain"/>
    <property type="match status" value="1"/>
</dbReference>
<dbReference type="InterPro" id="IPR050398">
    <property type="entry name" value="Bact_Sensor_His_Kinase"/>
</dbReference>
<dbReference type="InterPro" id="IPR032404">
    <property type="entry name" value="CpxA_peri"/>
</dbReference>
<dbReference type="InterPro" id="IPR038515">
    <property type="entry name" value="CpxA_peri_sf"/>
</dbReference>
<dbReference type="InterPro" id="IPR003660">
    <property type="entry name" value="HAMP_dom"/>
</dbReference>
<dbReference type="InterPro" id="IPR036890">
    <property type="entry name" value="HATPase_C_sf"/>
</dbReference>
<dbReference type="InterPro" id="IPR005467">
    <property type="entry name" value="His_kinase_dom"/>
</dbReference>
<dbReference type="InterPro" id="IPR003661">
    <property type="entry name" value="HisK_dim/P_dom"/>
</dbReference>
<dbReference type="InterPro" id="IPR036097">
    <property type="entry name" value="HisK_dim/P_sf"/>
</dbReference>
<dbReference type="InterPro" id="IPR004358">
    <property type="entry name" value="Sig_transdc_His_kin-like_C"/>
</dbReference>
<dbReference type="NCBIfam" id="NF007007">
    <property type="entry name" value="PRK09470.1"/>
    <property type="match status" value="1"/>
</dbReference>
<dbReference type="PANTHER" id="PTHR45528">
    <property type="entry name" value="SENSOR HISTIDINE KINASE CPXA"/>
    <property type="match status" value="1"/>
</dbReference>
<dbReference type="PANTHER" id="PTHR45528:SF1">
    <property type="entry name" value="SENSOR HISTIDINE KINASE CPXA"/>
    <property type="match status" value="1"/>
</dbReference>
<dbReference type="Pfam" id="PF16527">
    <property type="entry name" value="CpxA_peri"/>
    <property type="match status" value="1"/>
</dbReference>
<dbReference type="Pfam" id="PF00672">
    <property type="entry name" value="HAMP"/>
    <property type="match status" value="1"/>
</dbReference>
<dbReference type="Pfam" id="PF02518">
    <property type="entry name" value="HATPase_c"/>
    <property type="match status" value="1"/>
</dbReference>
<dbReference type="Pfam" id="PF00512">
    <property type="entry name" value="HisKA"/>
    <property type="match status" value="1"/>
</dbReference>
<dbReference type="PRINTS" id="PR00344">
    <property type="entry name" value="BCTRLSENSOR"/>
</dbReference>
<dbReference type="SMART" id="SM00304">
    <property type="entry name" value="HAMP"/>
    <property type="match status" value="1"/>
</dbReference>
<dbReference type="SMART" id="SM00387">
    <property type="entry name" value="HATPase_c"/>
    <property type="match status" value="1"/>
</dbReference>
<dbReference type="SMART" id="SM00388">
    <property type="entry name" value="HisKA"/>
    <property type="match status" value="1"/>
</dbReference>
<dbReference type="SUPFAM" id="SSF55874">
    <property type="entry name" value="ATPase domain of HSP90 chaperone/DNA topoisomerase II/histidine kinase"/>
    <property type="match status" value="1"/>
</dbReference>
<dbReference type="SUPFAM" id="SSF47384">
    <property type="entry name" value="Homodimeric domain of signal transducing histidine kinase"/>
    <property type="match status" value="1"/>
</dbReference>
<dbReference type="PROSITE" id="PS50885">
    <property type="entry name" value="HAMP"/>
    <property type="match status" value="1"/>
</dbReference>
<dbReference type="PROSITE" id="PS50109">
    <property type="entry name" value="HIS_KIN"/>
    <property type="match status" value="1"/>
</dbReference>
<accession>P0AE82</accession>
<accession>P08336</accession>
<accession>Q2M8K8</accession>
<name>CPXA_ECOLI</name>
<sequence>MIGSLTARIFAIFWLTLALVLMLVLMLPKLDSRQMTELLDSEQRQGLMIEQHVEAELANDPPNDLMWWRRLFRAIDKWAPPGQRLLLVTTEGRVIGAERSEMQIIRNFIGQADNADHPQKKKYGRVELVGPFSVRDGEDNYQLYLIRPASSSQSDFINLLFDRPLLLLIVTMLVSTPLLLWLAWSLAKPARKLKNAADEVAQGNLRQHPELEAGPQEFLAAGASFNQMVTALERMMTSQQRLLSDISHELRTPLTRLQLGTALLRRRSGESKELERIETEAQRLDSMINDLLVMSRNQQKNALVSETIKANQLWSEVLDNAAFEAEQMGKSLTVNFPPGPWPLYGNPNALESALENIVRNALRYSHTKIEVGFAVDKDGITITVDDDGPGVSPEDREQIFRPFYRTDEARDRESGGTGLGLAIVETAIQQHRGWVKAEDSPLGGLRLVIWLPLYKRS</sequence>
<comment type="function">
    <text evidence="6 7 10 11 13 14 16 17 19">Histidine kinase member of the two-component regulatory system CpxA/CpxR which responds to envelope stress response by activating expression of downstream genes including cpxP, degP, dsbA and ppiA (PubMed:7883164, PubMed:9401031, PubMed:9473036). Activates CpxR by phosphorylation; has autokinase, phosphotransferase and (in the presence of Mg(2+) and/or ATP or ADP) phosphatase activity (PubMed:17259177, PubMed:24492262, PubMed:9401031). The kinase activity is inhibited by periplasmic accessory protein CpxP; proteolysis of CpxP relieves inhibition (PubMed:16166523, PubMed:17259177, PubMed:25207645). Involved in several diverse cellular processes, including the functioning of acetohydroxyacid synthetase I, the biosynthesis of isoleucine and valine, the TraJ protein activation activity for tra gene expression in F plasmid (PubMed:8432716), and the synthesis, translocation, or stability of cell envelope proteins (PubMed:7883164). Activates transcription of periplasmic protease degP, probably by phosphorylating the cognate response protein CpxR; overexpression of an outer membrane lipoprotein NlpE also leads to transcription of degP via CpxRA (PubMed:7883164). Required for efficient binding of stationary phase cells to hydrophobic surfaces, part of the process of biofilm formation (PubMed:11830644).</text>
</comment>
<comment type="catalytic activity">
    <reaction evidence="16">
        <text>ATP + protein L-histidine = ADP + protein N-phospho-L-histidine.</text>
        <dbReference type="EC" id="2.7.13.3"/>
    </reaction>
</comment>
<comment type="cofactor">
    <cofactor evidence="16">
        <name>Mg(2+)</name>
        <dbReference type="ChEBI" id="CHEBI:18420"/>
    </cofactor>
    <text evidence="16">Phosphotransfer to CpxR is stimulated by Mg(2+) and/or Mn(2+).</text>
</comment>
<comment type="activity regulation">
    <text evidence="3 6 7 11 13 15 17">The two-component system is activated by envelope stress such as overexpression of some (misfolded) periplasmic proteins (PubMed:7883164, PubMed:9351822). Activated by spheroplasting (which removes the periplasm) in an autoregulatory cpxA-cpxR-dependent fashion (PubMed:10972835). Cpx two-component system is induced at pH 8.0; in a degP deletion mutant induction is halved (PubMed:16166523, PubMed:9473036). The kinase activity is inhibited by periplasmic accessory protein CpxP; proteolysis of CpxP relieves inhibition (PubMed:16166523, PubMed:17259177, PubMed:25207645). Autokinase activity reconstituted in liposomes is 50% inhibited by periplasmic accessory protein CpxP, but CpxP has no effect on phosphatase activity; autokinase stimulated by KCl, NH(4)Cl, RbCl, pH 7.5 and 8.0, inhibited by sensor kinase inhibitors tetrachlorosalicylanilid and ethodin (PubMed:17259177).</text>
</comment>
<comment type="subunit">
    <text evidence="10 11 21">The isolated cytoplasmic domain (residues 188-457) crystallizes as a homodimer, and forms dimers of dimers in solution which may be catalytically important (PubMed:24492262). Interacts with periplasmic accessory protein CpxP (PubMed:16166523, PubMed:21317318, PubMed:21239493, PubMed:25207645); interaction with CpxP is not seen in vivo when cells are grown in 0.3 M NaCl, or if the misfolded P pili protein PapE is overexpressed (PubMed:25207645). Interacts with cognate response regulator CpxR (PubMed:25207645).</text>
</comment>
<comment type="interaction">
    <interactant intactId="EBI-9141330">
        <id>P0AE82</id>
    </interactant>
    <interactant intactId="EBI-9141330">
        <id>P0AE82</id>
        <label>cpxA</label>
    </interactant>
    <organismsDiffer>false</organismsDiffer>
    <experiments>3</experiments>
</comment>
<comment type="interaction">
    <interactant intactId="EBI-9141330">
        <id>P0AE82</id>
    </interactant>
    <interactant intactId="EBI-550918">
        <id>P0AE88</id>
        <label>cpxR</label>
    </interactant>
    <organismsDiffer>false</organismsDiffer>
    <experiments>3</experiments>
</comment>
<comment type="interaction">
    <interactant intactId="EBI-9141330">
        <id>P0AE82</id>
    </interactant>
    <interactant intactId="EBI-544692">
        <id>P76086</id>
        <label>paaX</label>
    </interactant>
    <organismsDiffer>false</organismsDiffer>
    <experiments>3</experiments>
</comment>
<comment type="subcellular location">
    <subcellularLocation>
        <location evidence="5 11 12">Cell inner membrane</location>
        <topology evidence="20 23">Multi-pass membrane protein</topology>
    </subcellularLocation>
</comment>
<comment type="domain">
    <text evidence="10 16">The periplasmic segment (residues 30-163) defines the sensory domain (PubMed:9401031). Conformational changes in the cytoplasmic HAMP domain modulate the mobility of the central alpha-helices (which bend at Ser-238 and Pro-253) that allows formation of 1 kinase-active state.</text>
</comment>
<comment type="PTM">
    <text evidence="10 16">Autophosphorylated (PubMed:24492262, PubMed:9401031). Maximal phosphorylation of the dimeric isolated cytoplasmic domain (residues 188-457) is about 70%, suggesting the protein may be hemiphosphorylated in vivo; probably occurs via a trans-autophosphorylation mechanism, i.e. one subunit phosphorylates the other (PubMed:24492262).</text>
</comment>
<comment type="disruption phenotype">
    <text evidence="3 4 8 9 13 17">Loss of the Cpx envelope stress response (PubMed:10972835). Decreased resistance to the antibiotic amnikacin (PubMed:2185221). Single cpxA and double cpxR-cpxA mutant decrease transcription of degP (PubMed:7883164). Decreased transcription of cpxP (PubMed:9473036). Hypersensitive to alkaline pH (greater than pH 8.8) (PubMed:9473036). Decreased numbers of stationary phase cells bind to hydrophobic surfaces (PubMed:11830644). Greatly increased resistance to hydroxyurea, probably due to decreased recognition of mis-folded proteins which eventually leads to decreased OH radical formation (PubMed:20005847).</text>
</comment>
<comment type="sequence caution" evidence="18">
    <conflict type="erroneous initiation">
        <sequence resource="EMBL-CDS" id="AAA72540"/>
    </conflict>
    <text>Truncated N-terminus.</text>
</comment>
<organism>
    <name type="scientific">Escherichia coli (strain K12)</name>
    <dbReference type="NCBI Taxonomy" id="83333"/>
    <lineage>
        <taxon>Bacteria</taxon>
        <taxon>Pseudomonadati</taxon>
        <taxon>Pseudomonadota</taxon>
        <taxon>Gammaproteobacteria</taxon>
        <taxon>Enterobacterales</taxon>
        <taxon>Enterobacteriaceae</taxon>
        <taxon>Escherichia</taxon>
    </lineage>
</organism>
<keyword id="KW-0002">3D-structure</keyword>
<keyword id="KW-0067">ATP-binding</keyword>
<keyword id="KW-0130">Cell adhesion</keyword>
<keyword id="KW-0997">Cell inner membrane</keyword>
<keyword id="KW-1003">Cell membrane</keyword>
<keyword id="KW-0418">Kinase</keyword>
<keyword id="KW-0472">Membrane</keyword>
<keyword id="KW-0547">Nucleotide-binding</keyword>
<keyword id="KW-0597">Phosphoprotein</keyword>
<keyword id="KW-1185">Reference proteome</keyword>
<keyword id="KW-0808">Transferase</keyword>
<keyword id="KW-0812">Transmembrane</keyword>
<keyword id="KW-1133">Transmembrane helix</keyword>
<keyword id="KW-0902">Two-component regulatory system</keyword>